<reference key="1">
    <citation type="journal article" date="2006" name="Proc. Natl. Acad. Sci. U.S.A.">
        <title>Comparative genomics of the lactic acid bacteria.</title>
        <authorList>
            <person name="Makarova K.S."/>
            <person name="Slesarev A."/>
            <person name="Wolf Y.I."/>
            <person name="Sorokin A."/>
            <person name="Mirkin B."/>
            <person name="Koonin E.V."/>
            <person name="Pavlov A."/>
            <person name="Pavlova N."/>
            <person name="Karamychev V."/>
            <person name="Polouchine N."/>
            <person name="Shakhova V."/>
            <person name="Grigoriev I."/>
            <person name="Lou Y."/>
            <person name="Rohksar D."/>
            <person name="Lucas S."/>
            <person name="Huang K."/>
            <person name="Goodstein D.M."/>
            <person name="Hawkins T."/>
            <person name="Plengvidhya V."/>
            <person name="Welker D."/>
            <person name="Hughes J."/>
            <person name="Goh Y."/>
            <person name="Benson A."/>
            <person name="Baldwin K."/>
            <person name="Lee J.-H."/>
            <person name="Diaz-Muniz I."/>
            <person name="Dosti B."/>
            <person name="Smeianov V."/>
            <person name="Wechter W."/>
            <person name="Barabote R."/>
            <person name="Lorca G."/>
            <person name="Altermann E."/>
            <person name="Barrangou R."/>
            <person name="Ganesan B."/>
            <person name="Xie Y."/>
            <person name="Rawsthorne H."/>
            <person name="Tamir D."/>
            <person name="Parker C."/>
            <person name="Breidt F."/>
            <person name="Broadbent J.R."/>
            <person name="Hutkins R."/>
            <person name="O'Sullivan D."/>
            <person name="Steele J."/>
            <person name="Unlu G."/>
            <person name="Saier M.H. Jr."/>
            <person name="Klaenhammer T."/>
            <person name="Richardson P."/>
            <person name="Kozyavkin S."/>
            <person name="Weimer B.C."/>
            <person name="Mills D.A."/>
        </authorList>
    </citation>
    <scope>NUCLEOTIDE SEQUENCE [LARGE SCALE GENOMIC DNA]</scope>
    <source>
        <strain>SK11</strain>
    </source>
</reference>
<comment type="function">
    <text evidence="1">Catalyzes the synthesis of GMP from XMP.</text>
</comment>
<comment type="catalytic activity">
    <reaction evidence="1">
        <text>XMP + L-glutamine + ATP + H2O = GMP + L-glutamate + AMP + diphosphate + 2 H(+)</text>
        <dbReference type="Rhea" id="RHEA:11680"/>
        <dbReference type="ChEBI" id="CHEBI:15377"/>
        <dbReference type="ChEBI" id="CHEBI:15378"/>
        <dbReference type="ChEBI" id="CHEBI:29985"/>
        <dbReference type="ChEBI" id="CHEBI:30616"/>
        <dbReference type="ChEBI" id="CHEBI:33019"/>
        <dbReference type="ChEBI" id="CHEBI:57464"/>
        <dbReference type="ChEBI" id="CHEBI:58115"/>
        <dbReference type="ChEBI" id="CHEBI:58359"/>
        <dbReference type="ChEBI" id="CHEBI:456215"/>
        <dbReference type="EC" id="6.3.5.2"/>
    </reaction>
</comment>
<comment type="pathway">
    <text evidence="1">Purine metabolism; GMP biosynthesis; GMP from XMP (L-Gln route): step 1/1.</text>
</comment>
<comment type="subunit">
    <text evidence="1">Homodimer.</text>
</comment>
<organism>
    <name type="scientific">Lactococcus lactis subsp. cremoris (strain SK11)</name>
    <dbReference type="NCBI Taxonomy" id="272622"/>
    <lineage>
        <taxon>Bacteria</taxon>
        <taxon>Bacillati</taxon>
        <taxon>Bacillota</taxon>
        <taxon>Bacilli</taxon>
        <taxon>Lactobacillales</taxon>
        <taxon>Streptococcaceae</taxon>
        <taxon>Lactococcus</taxon>
        <taxon>Lactococcus cremoris subsp. cremoris</taxon>
    </lineage>
</organism>
<protein>
    <recommendedName>
        <fullName evidence="1">GMP synthase [glutamine-hydrolyzing]</fullName>
        <ecNumber evidence="1">6.3.5.2</ecNumber>
    </recommendedName>
    <alternativeName>
        <fullName evidence="1">GMP synthetase</fullName>
    </alternativeName>
    <alternativeName>
        <fullName evidence="1">Glutamine amidotransferase</fullName>
    </alternativeName>
</protein>
<name>GUAA_LACLS</name>
<proteinExistence type="inferred from homology"/>
<dbReference type="EC" id="6.3.5.2" evidence="1"/>
<dbReference type="EMBL" id="CP000425">
    <property type="protein sequence ID" value="ABJ73085.1"/>
    <property type="molecule type" value="Genomic_DNA"/>
</dbReference>
<dbReference type="RefSeq" id="WP_011676445.1">
    <property type="nucleotide sequence ID" value="NC_008527.1"/>
</dbReference>
<dbReference type="SMR" id="Q02Y87"/>
<dbReference type="MEROPS" id="C26.957"/>
<dbReference type="KEGG" id="llc:LACR_1583"/>
<dbReference type="HOGENOM" id="CLU_014340_0_5_9"/>
<dbReference type="UniPathway" id="UPA00189">
    <property type="reaction ID" value="UER00296"/>
</dbReference>
<dbReference type="Proteomes" id="UP000000240">
    <property type="component" value="Chromosome"/>
</dbReference>
<dbReference type="GO" id="GO:0005829">
    <property type="term" value="C:cytosol"/>
    <property type="evidence" value="ECO:0007669"/>
    <property type="project" value="TreeGrafter"/>
</dbReference>
<dbReference type="GO" id="GO:0005524">
    <property type="term" value="F:ATP binding"/>
    <property type="evidence" value="ECO:0007669"/>
    <property type="project" value="UniProtKB-UniRule"/>
</dbReference>
<dbReference type="GO" id="GO:0003921">
    <property type="term" value="F:GMP synthase activity"/>
    <property type="evidence" value="ECO:0007669"/>
    <property type="project" value="InterPro"/>
</dbReference>
<dbReference type="CDD" id="cd01742">
    <property type="entry name" value="GATase1_GMP_Synthase"/>
    <property type="match status" value="1"/>
</dbReference>
<dbReference type="CDD" id="cd01997">
    <property type="entry name" value="GMP_synthase_C"/>
    <property type="match status" value="1"/>
</dbReference>
<dbReference type="FunFam" id="3.30.300.10:FF:000002">
    <property type="entry name" value="GMP synthase [glutamine-hydrolyzing]"/>
    <property type="match status" value="1"/>
</dbReference>
<dbReference type="FunFam" id="3.40.50.620:FF:000001">
    <property type="entry name" value="GMP synthase [glutamine-hydrolyzing]"/>
    <property type="match status" value="1"/>
</dbReference>
<dbReference type="FunFam" id="3.40.50.880:FF:000001">
    <property type="entry name" value="GMP synthase [glutamine-hydrolyzing]"/>
    <property type="match status" value="1"/>
</dbReference>
<dbReference type="Gene3D" id="3.30.300.10">
    <property type="match status" value="1"/>
</dbReference>
<dbReference type="Gene3D" id="3.40.50.880">
    <property type="match status" value="1"/>
</dbReference>
<dbReference type="Gene3D" id="3.40.50.620">
    <property type="entry name" value="HUPs"/>
    <property type="match status" value="1"/>
</dbReference>
<dbReference type="HAMAP" id="MF_00344">
    <property type="entry name" value="GMP_synthase"/>
    <property type="match status" value="1"/>
</dbReference>
<dbReference type="InterPro" id="IPR029062">
    <property type="entry name" value="Class_I_gatase-like"/>
</dbReference>
<dbReference type="InterPro" id="IPR017926">
    <property type="entry name" value="GATASE"/>
</dbReference>
<dbReference type="InterPro" id="IPR001674">
    <property type="entry name" value="GMP_synth_C"/>
</dbReference>
<dbReference type="InterPro" id="IPR004739">
    <property type="entry name" value="GMP_synth_GATase"/>
</dbReference>
<dbReference type="InterPro" id="IPR022955">
    <property type="entry name" value="GMP_synthase"/>
</dbReference>
<dbReference type="InterPro" id="IPR025777">
    <property type="entry name" value="GMPS_ATP_PPase_dom"/>
</dbReference>
<dbReference type="InterPro" id="IPR022310">
    <property type="entry name" value="NAD/GMP_synthase"/>
</dbReference>
<dbReference type="InterPro" id="IPR014729">
    <property type="entry name" value="Rossmann-like_a/b/a_fold"/>
</dbReference>
<dbReference type="NCBIfam" id="TIGR00884">
    <property type="entry name" value="guaA_Cterm"/>
    <property type="match status" value="1"/>
</dbReference>
<dbReference type="NCBIfam" id="TIGR00888">
    <property type="entry name" value="guaA_Nterm"/>
    <property type="match status" value="1"/>
</dbReference>
<dbReference type="NCBIfam" id="NF000848">
    <property type="entry name" value="PRK00074.1"/>
    <property type="match status" value="1"/>
</dbReference>
<dbReference type="PANTHER" id="PTHR11922:SF2">
    <property type="entry name" value="GMP SYNTHASE [GLUTAMINE-HYDROLYZING]"/>
    <property type="match status" value="1"/>
</dbReference>
<dbReference type="PANTHER" id="PTHR11922">
    <property type="entry name" value="GMP SYNTHASE-RELATED"/>
    <property type="match status" value="1"/>
</dbReference>
<dbReference type="Pfam" id="PF00117">
    <property type="entry name" value="GATase"/>
    <property type="match status" value="1"/>
</dbReference>
<dbReference type="Pfam" id="PF00958">
    <property type="entry name" value="GMP_synt_C"/>
    <property type="match status" value="1"/>
</dbReference>
<dbReference type="Pfam" id="PF02540">
    <property type="entry name" value="NAD_synthase"/>
    <property type="match status" value="1"/>
</dbReference>
<dbReference type="PRINTS" id="PR00097">
    <property type="entry name" value="ANTSNTHASEII"/>
</dbReference>
<dbReference type="PRINTS" id="PR00099">
    <property type="entry name" value="CPSGATASE"/>
</dbReference>
<dbReference type="PRINTS" id="PR00096">
    <property type="entry name" value="GATASE"/>
</dbReference>
<dbReference type="SUPFAM" id="SSF52402">
    <property type="entry name" value="Adenine nucleotide alpha hydrolases-like"/>
    <property type="match status" value="1"/>
</dbReference>
<dbReference type="SUPFAM" id="SSF52317">
    <property type="entry name" value="Class I glutamine amidotransferase-like"/>
    <property type="match status" value="1"/>
</dbReference>
<dbReference type="SUPFAM" id="SSF54810">
    <property type="entry name" value="GMP synthetase C-terminal dimerisation domain"/>
    <property type="match status" value="1"/>
</dbReference>
<dbReference type="PROSITE" id="PS51273">
    <property type="entry name" value="GATASE_TYPE_1"/>
    <property type="match status" value="1"/>
</dbReference>
<dbReference type="PROSITE" id="PS51553">
    <property type="entry name" value="GMPS_ATP_PPASE"/>
    <property type="match status" value="1"/>
</dbReference>
<accession>Q02Y87</accession>
<keyword id="KW-0067">ATP-binding</keyword>
<keyword id="KW-0315">Glutamine amidotransferase</keyword>
<keyword id="KW-0332">GMP biosynthesis</keyword>
<keyword id="KW-0436">Ligase</keyword>
<keyword id="KW-0547">Nucleotide-binding</keyword>
<keyword id="KW-0658">Purine biosynthesis</keyword>
<evidence type="ECO:0000255" key="1">
    <source>
        <dbReference type="HAMAP-Rule" id="MF_00344"/>
    </source>
</evidence>
<gene>
    <name evidence="1" type="primary">guaA</name>
    <name type="ordered locus">LACR_1583</name>
</gene>
<feature type="chain" id="PRO_1000120329" description="GMP synthase [glutamine-hydrolyzing]">
    <location>
        <begin position="1"/>
        <end position="513"/>
    </location>
</feature>
<feature type="domain" description="Glutamine amidotransferase type-1" evidence="1">
    <location>
        <begin position="8"/>
        <end position="198"/>
    </location>
</feature>
<feature type="domain" description="GMPS ATP-PPase" evidence="1">
    <location>
        <begin position="199"/>
        <end position="388"/>
    </location>
</feature>
<feature type="active site" description="Nucleophile" evidence="1">
    <location>
        <position position="85"/>
    </location>
</feature>
<feature type="active site" evidence="1">
    <location>
        <position position="172"/>
    </location>
</feature>
<feature type="active site" evidence="1">
    <location>
        <position position="174"/>
    </location>
</feature>
<feature type="binding site" evidence="1">
    <location>
        <begin position="226"/>
        <end position="232"/>
    </location>
    <ligand>
        <name>ATP</name>
        <dbReference type="ChEBI" id="CHEBI:30616"/>
    </ligand>
</feature>
<sequence length="513" mass="56862">MSDTTLEKIIVLDYGSQYNQLIARRIREIGVFSELMSHKVTAKEIREINPIGIILSGGPNSVYDEGSFDIDPEIFELGLPVLGICYGMQLMSYKLGGMVEAAGEREYGVAPLQLTEKSALFAGTPEVQDVLMSHGDRVTAIPEGFHVVGTSPNSPFAAVENTERNLYGIQFHPEVRHSVHGTEMLRNFALNTCGAKGNWSMENFIDMQIKDVREKVGDKKVLLGLSGGVDSSVVGVLLQRAIGDQLTSIFVDHGFLRKGEADQVMETLGGKFGLNIIKVDAQKRFMDKLVGLSDPETKRKIIGNEFVYVFDDEANKLEGVDFLAQGTLYTDVIESGTDTAQTIKSHHNVGGLPEDMQFQLIEPLNTLFKDEVRALGTQLGMPDEIVWRQPFPGPGLAIRVLGDLTEEKLETVRESDAILREEIAASGLERDVWQYFTVNTDVKSVGVMGDQRTYDYTLAIRAITSIDGMTADFAQLPWDLLQKISKRIVNEVDHVNRIVYDITSKPPATVEWQ</sequence>